<gene>
    <name evidence="1" type="primary">murD</name>
    <name type="ordered locus">Gmet_0410</name>
</gene>
<dbReference type="EC" id="6.3.2.9" evidence="1"/>
<dbReference type="EMBL" id="CP000148">
    <property type="protein sequence ID" value="ABB30653.1"/>
    <property type="molecule type" value="Genomic_DNA"/>
</dbReference>
<dbReference type="RefSeq" id="WP_004512382.1">
    <property type="nucleotide sequence ID" value="NC_007517.1"/>
</dbReference>
<dbReference type="SMR" id="Q39YM1"/>
<dbReference type="STRING" id="269799.Gmet_0410"/>
<dbReference type="KEGG" id="gme:Gmet_0410"/>
<dbReference type="eggNOG" id="COG0771">
    <property type="taxonomic scope" value="Bacteria"/>
</dbReference>
<dbReference type="HOGENOM" id="CLU_032540_0_0_7"/>
<dbReference type="UniPathway" id="UPA00219"/>
<dbReference type="Proteomes" id="UP000007073">
    <property type="component" value="Chromosome"/>
</dbReference>
<dbReference type="GO" id="GO:0005737">
    <property type="term" value="C:cytoplasm"/>
    <property type="evidence" value="ECO:0007669"/>
    <property type="project" value="UniProtKB-SubCell"/>
</dbReference>
<dbReference type="GO" id="GO:0005524">
    <property type="term" value="F:ATP binding"/>
    <property type="evidence" value="ECO:0007669"/>
    <property type="project" value="UniProtKB-UniRule"/>
</dbReference>
<dbReference type="GO" id="GO:0008764">
    <property type="term" value="F:UDP-N-acetylmuramoylalanine-D-glutamate ligase activity"/>
    <property type="evidence" value="ECO:0007669"/>
    <property type="project" value="UniProtKB-UniRule"/>
</dbReference>
<dbReference type="GO" id="GO:0051301">
    <property type="term" value="P:cell division"/>
    <property type="evidence" value="ECO:0007669"/>
    <property type="project" value="UniProtKB-KW"/>
</dbReference>
<dbReference type="GO" id="GO:0071555">
    <property type="term" value="P:cell wall organization"/>
    <property type="evidence" value="ECO:0007669"/>
    <property type="project" value="UniProtKB-KW"/>
</dbReference>
<dbReference type="GO" id="GO:0009252">
    <property type="term" value="P:peptidoglycan biosynthetic process"/>
    <property type="evidence" value="ECO:0007669"/>
    <property type="project" value="UniProtKB-UniRule"/>
</dbReference>
<dbReference type="GO" id="GO:0008360">
    <property type="term" value="P:regulation of cell shape"/>
    <property type="evidence" value="ECO:0007669"/>
    <property type="project" value="UniProtKB-KW"/>
</dbReference>
<dbReference type="Gene3D" id="3.90.190.20">
    <property type="entry name" value="Mur ligase, C-terminal domain"/>
    <property type="match status" value="1"/>
</dbReference>
<dbReference type="Gene3D" id="3.40.1190.10">
    <property type="entry name" value="Mur-like, catalytic domain"/>
    <property type="match status" value="1"/>
</dbReference>
<dbReference type="Gene3D" id="3.40.50.720">
    <property type="entry name" value="NAD(P)-binding Rossmann-like Domain"/>
    <property type="match status" value="1"/>
</dbReference>
<dbReference type="HAMAP" id="MF_00639">
    <property type="entry name" value="MurD"/>
    <property type="match status" value="1"/>
</dbReference>
<dbReference type="InterPro" id="IPR036565">
    <property type="entry name" value="Mur-like_cat_sf"/>
</dbReference>
<dbReference type="InterPro" id="IPR004101">
    <property type="entry name" value="Mur_ligase_C"/>
</dbReference>
<dbReference type="InterPro" id="IPR036615">
    <property type="entry name" value="Mur_ligase_C_dom_sf"/>
</dbReference>
<dbReference type="InterPro" id="IPR013221">
    <property type="entry name" value="Mur_ligase_cen"/>
</dbReference>
<dbReference type="InterPro" id="IPR005762">
    <property type="entry name" value="MurD"/>
</dbReference>
<dbReference type="NCBIfam" id="TIGR01087">
    <property type="entry name" value="murD"/>
    <property type="match status" value="1"/>
</dbReference>
<dbReference type="PANTHER" id="PTHR43692">
    <property type="entry name" value="UDP-N-ACETYLMURAMOYLALANINE--D-GLUTAMATE LIGASE"/>
    <property type="match status" value="1"/>
</dbReference>
<dbReference type="PANTHER" id="PTHR43692:SF1">
    <property type="entry name" value="UDP-N-ACETYLMURAMOYLALANINE--D-GLUTAMATE LIGASE"/>
    <property type="match status" value="1"/>
</dbReference>
<dbReference type="Pfam" id="PF02875">
    <property type="entry name" value="Mur_ligase_C"/>
    <property type="match status" value="1"/>
</dbReference>
<dbReference type="Pfam" id="PF08245">
    <property type="entry name" value="Mur_ligase_M"/>
    <property type="match status" value="1"/>
</dbReference>
<dbReference type="Pfam" id="PF21799">
    <property type="entry name" value="MurD-like_N"/>
    <property type="match status" value="1"/>
</dbReference>
<dbReference type="SUPFAM" id="SSF51984">
    <property type="entry name" value="MurCD N-terminal domain"/>
    <property type="match status" value="1"/>
</dbReference>
<dbReference type="SUPFAM" id="SSF53623">
    <property type="entry name" value="MurD-like peptide ligases, catalytic domain"/>
    <property type="match status" value="1"/>
</dbReference>
<dbReference type="SUPFAM" id="SSF53244">
    <property type="entry name" value="MurD-like peptide ligases, peptide-binding domain"/>
    <property type="match status" value="1"/>
</dbReference>
<organism>
    <name type="scientific">Geobacter metallireducens (strain ATCC 53774 / DSM 7210 / GS-15)</name>
    <dbReference type="NCBI Taxonomy" id="269799"/>
    <lineage>
        <taxon>Bacteria</taxon>
        <taxon>Pseudomonadati</taxon>
        <taxon>Thermodesulfobacteriota</taxon>
        <taxon>Desulfuromonadia</taxon>
        <taxon>Geobacterales</taxon>
        <taxon>Geobacteraceae</taxon>
        <taxon>Geobacter</taxon>
    </lineage>
</organism>
<reference key="1">
    <citation type="journal article" date="2009" name="BMC Microbiol.">
        <title>The genome sequence of Geobacter metallireducens: features of metabolism, physiology and regulation common and dissimilar to Geobacter sulfurreducens.</title>
        <authorList>
            <person name="Aklujkar M."/>
            <person name="Krushkal J."/>
            <person name="DiBartolo G."/>
            <person name="Lapidus A."/>
            <person name="Land M.L."/>
            <person name="Lovley D.R."/>
        </authorList>
    </citation>
    <scope>NUCLEOTIDE SEQUENCE [LARGE SCALE GENOMIC DNA]</scope>
    <source>
        <strain>ATCC 53774 / DSM 7210 / GS-15</strain>
    </source>
</reference>
<comment type="function">
    <text evidence="1">Cell wall formation. Catalyzes the addition of glutamate to the nucleotide precursor UDP-N-acetylmuramoyl-L-alanine (UMA).</text>
</comment>
<comment type="catalytic activity">
    <reaction evidence="1">
        <text>UDP-N-acetyl-alpha-D-muramoyl-L-alanine + D-glutamate + ATP = UDP-N-acetyl-alpha-D-muramoyl-L-alanyl-D-glutamate + ADP + phosphate + H(+)</text>
        <dbReference type="Rhea" id="RHEA:16429"/>
        <dbReference type="ChEBI" id="CHEBI:15378"/>
        <dbReference type="ChEBI" id="CHEBI:29986"/>
        <dbReference type="ChEBI" id="CHEBI:30616"/>
        <dbReference type="ChEBI" id="CHEBI:43474"/>
        <dbReference type="ChEBI" id="CHEBI:83898"/>
        <dbReference type="ChEBI" id="CHEBI:83900"/>
        <dbReference type="ChEBI" id="CHEBI:456216"/>
        <dbReference type="EC" id="6.3.2.9"/>
    </reaction>
</comment>
<comment type="pathway">
    <text evidence="1">Cell wall biogenesis; peptidoglycan biosynthesis.</text>
</comment>
<comment type="subcellular location">
    <subcellularLocation>
        <location evidence="1">Cytoplasm</location>
    </subcellularLocation>
</comment>
<comment type="similarity">
    <text evidence="1">Belongs to the MurCDEF family.</text>
</comment>
<feature type="chain" id="PRO_0000257193" description="UDP-N-acetylmuramoylalanine--D-glutamate ligase">
    <location>
        <begin position="1"/>
        <end position="452"/>
    </location>
</feature>
<feature type="binding site" evidence="1">
    <location>
        <begin position="115"/>
        <end position="121"/>
    </location>
    <ligand>
        <name>ATP</name>
        <dbReference type="ChEBI" id="CHEBI:30616"/>
    </ligand>
</feature>
<accession>Q39YM1</accession>
<proteinExistence type="inferred from homology"/>
<keyword id="KW-0067">ATP-binding</keyword>
<keyword id="KW-0131">Cell cycle</keyword>
<keyword id="KW-0132">Cell division</keyword>
<keyword id="KW-0133">Cell shape</keyword>
<keyword id="KW-0961">Cell wall biogenesis/degradation</keyword>
<keyword id="KW-0963">Cytoplasm</keyword>
<keyword id="KW-0436">Ligase</keyword>
<keyword id="KW-0547">Nucleotide-binding</keyword>
<keyword id="KW-0573">Peptidoglycan synthesis</keyword>
<keyword id="KW-1185">Reference proteome</keyword>
<sequence length="452" mass="49050">MEISGKNILVVGLARTGVAVARFLARNGARVTVTDLRDESALAGPLRELAGLSVRYVLDRHDEADFAAADVVVVSPGVPQESPYLQAARRAGREVITEIELASRFVTVPMVAITGTNGKTTTTTLTGEIFSACGFRTFVGGNIGNPLIELVEGGETVERVVVEISSFQLEWISSFRPRVAVLLNITEDHLDRYATFQEYIDAKVRIFENQESTDYAVLNVDDPIVAGIAGRVAATVFPMSQQRELAEGVFHRDGVITFRHQGREERFPTARFRITGVHNIENIMASLAATLLLGCDAKQALAAVEGFGGLPHRMELVRELAGVRYYEDSKATNVGSVEKALASFNDITLIAGGKDKGGSYAPLAPLVTERVRHMVLIGEAKERMARELGSLTDTRMATTLEEAVELAASLTEPGGVVLFSPACSSFDMFRDYEERAQRFRAAVNALGTGERP</sequence>
<evidence type="ECO:0000255" key="1">
    <source>
        <dbReference type="HAMAP-Rule" id="MF_00639"/>
    </source>
</evidence>
<name>MURD_GEOMG</name>
<protein>
    <recommendedName>
        <fullName evidence="1">UDP-N-acetylmuramoylalanine--D-glutamate ligase</fullName>
        <ecNumber evidence="1">6.3.2.9</ecNumber>
    </recommendedName>
    <alternativeName>
        <fullName evidence="1">D-glutamic acid-adding enzyme</fullName>
    </alternativeName>
    <alternativeName>
        <fullName evidence="1">UDP-N-acetylmuramoyl-L-alanyl-D-glutamate synthetase</fullName>
    </alternativeName>
</protein>